<name>HIS7_BORPD</name>
<accession>A9HWC8</accession>
<dbReference type="EC" id="4.2.1.19" evidence="1"/>
<dbReference type="EMBL" id="AM902716">
    <property type="protein sequence ID" value="CAP40467.1"/>
    <property type="molecule type" value="Genomic_DNA"/>
</dbReference>
<dbReference type="SMR" id="A9HWC8"/>
<dbReference type="STRING" id="94624.Bpet0136"/>
<dbReference type="KEGG" id="bpt:Bpet0136"/>
<dbReference type="eggNOG" id="COG0131">
    <property type="taxonomic scope" value="Bacteria"/>
</dbReference>
<dbReference type="UniPathway" id="UPA00031">
    <property type="reaction ID" value="UER00011"/>
</dbReference>
<dbReference type="Proteomes" id="UP000001225">
    <property type="component" value="Chromosome"/>
</dbReference>
<dbReference type="GO" id="GO:0005737">
    <property type="term" value="C:cytoplasm"/>
    <property type="evidence" value="ECO:0007669"/>
    <property type="project" value="UniProtKB-SubCell"/>
</dbReference>
<dbReference type="GO" id="GO:0004424">
    <property type="term" value="F:imidazoleglycerol-phosphate dehydratase activity"/>
    <property type="evidence" value="ECO:0007669"/>
    <property type="project" value="UniProtKB-UniRule"/>
</dbReference>
<dbReference type="GO" id="GO:0000105">
    <property type="term" value="P:L-histidine biosynthetic process"/>
    <property type="evidence" value="ECO:0007669"/>
    <property type="project" value="UniProtKB-UniRule"/>
</dbReference>
<dbReference type="CDD" id="cd07914">
    <property type="entry name" value="IGPD"/>
    <property type="match status" value="1"/>
</dbReference>
<dbReference type="FunFam" id="3.30.230.40:FF:000002">
    <property type="entry name" value="Imidazoleglycerol-phosphate dehydratase"/>
    <property type="match status" value="1"/>
</dbReference>
<dbReference type="FunFam" id="3.30.230.40:FF:000003">
    <property type="entry name" value="Imidazoleglycerol-phosphate dehydratase HisB"/>
    <property type="match status" value="1"/>
</dbReference>
<dbReference type="Gene3D" id="3.30.230.40">
    <property type="entry name" value="Imidazole glycerol phosphate dehydratase, domain 1"/>
    <property type="match status" value="2"/>
</dbReference>
<dbReference type="HAMAP" id="MF_00076">
    <property type="entry name" value="HisB"/>
    <property type="match status" value="1"/>
</dbReference>
<dbReference type="InterPro" id="IPR038494">
    <property type="entry name" value="IGPD_sf"/>
</dbReference>
<dbReference type="InterPro" id="IPR000807">
    <property type="entry name" value="ImidazoleglycerolP_deHydtase"/>
</dbReference>
<dbReference type="InterPro" id="IPR020565">
    <property type="entry name" value="ImidazoleglycerP_deHydtase_CS"/>
</dbReference>
<dbReference type="InterPro" id="IPR020568">
    <property type="entry name" value="Ribosomal_Su5_D2-typ_SF"/>
</dbReference>
<dbReference type="NCBIfam" id="NF002106">
    <property type="entry name" value="PRK00951.1-1"/>
    <property type="match status" value="1"/>
</dbReference>
<dbReference type="NCBIfam" id="NF002109">
    <property type="entry name" value="PRK00951.1-5"/>
    <property type="match status" value="1"/>
</dbReference>
<dbReference type="NCBIfam" id="NF002111">
    <property type="entry name" value="PRK00951.2-1"/>
    <property type="match status" value="1"/>
</dbReference>
<dbReference type="NCBIfam" id="NF002114">
    <property type="entry name" value="PRK00951.2-4"/>
    <property type="match status" value="1"/>
</dbReference>
<dbReference type="PANTHER" id="PTHR23133:SF2">
    <property type="entry name" value="IMIDAZOLEGLYCEROL-PHOSPHATE DEHYDRATASE"/>
    <property type="match status" value="1"/>
</dbReference>
<dbReference type="PANTHER" id="PTHR23133">
    <property type="entry name" value="IMIDAZOLEGLYCEROL-PHOSPHATE DEHYDRATASE HIS7"/>
    <property type="match status" value="1"/>
</dbReference>
<dbReference type="Pfam" id="PF00475">
    <property type="entry name" value="IGPD"/>
    <property type="match status" value="1"/>
</dbReference>
<dbReference type="SUPFAM" id="SSF54211">
    <property type="entry name" value="Ribosomal protein S5 domain 2-like"/>
    <property type="match status" value="2"/>
</dbReference>
<dbReference type="PROSITE" id="PS00954">
    <property type="entry name" value="IGP_DEHYDRATASE_1"/>
    <property type="match status" value="1"/>
</dbReference>
<dbReference type="PROSITE" id="PS00955">
    <property type="entry name" value="IGP_DEHYDRATASE_2"/>
    <property type="match status" value="1"/>
</dbReference>
<gene>
    <name evidence="1" type="primary">hisB</name>
    <name type="ordered locus">Bpet0136</name>
</gene>
<feature type="chain" id="PRO_1000092673" description="Imidazoleglycerol-phosphate dehydratase">
    <location>
        <begin position="1"/>
        <end position="195"/>
    </location>
</feature>
<sequence>MRTAEITRNTNETRIRVAVNLDGTGKQTLDTGVPFLDHMLDQIARHGLIDLDIKAEGDLHIDAHHTVEDVGITLGMAIAKAVGDKAGLRRYGHAYVPLDEALSRVVIDFSGRPGLEYHIPFTRARIGDFDVDLTREFFQGLVNHALVTLHIDNLRGVNAHHQCETVFKAFGRALRMALELDPRMGGAVPSTKGVL</sequence>
<reference key="1">
    <citation type="journal article" date="2008" name="BMC Genomics">
        <title>The missing link: Bordetella petrii is endowed with both the metabolic versatility of environmental bacteria and virulence traits of pathogenic Bordetellae.</title>
        <authorList>
            <person name="Gross R."/>
            <person name="Guzman C.A."/>
            <person name="Sebaihia M."/>
            <person name="Martin dos Santos V.A.P."/>
            <person name="Pieper D.H."/>
            <person name="Koebnik R."/>
            <person name="Lechner M."/>
            <person name="Bartels D."/>
            <person name="Buhrmester J."/>
            <person name="Choudhuri J.V."/>
            <person name="Ebensen T."/>
            <person name="Gaigalat L."/>
            <person name="Herrmann S."/>
            <person name="Khachane A.N."/>
            <person name="Larisch C."/>
            <person name="Link S."/>
            <person name="Linke B."/>
            <person name="Meyer F."/>
            <person name="Mormann S."/>
            <person name="Nakunst D."/>
            <person name="Rueckert C."/>
            <person name="Schneiker-Bekel S."/>
            <person name="Schulze K."/>
            <person name="Voerholter F.-J."/>
            <person name="Yevsa T."/>
            <person name="Engle J.T."/>
            <person name="Goldman W.E."/>
            <person name="Puehler A."/>
            <person name="Goebel U.B."/>
            <person name="Goesmann A."/>
            <person name="Bloecker H."/>
            <person name="Kaiser O."/>
            <person name="Martinez-Arias R."/>
        </authorList>
    </citation>
    <scope>NUCLEOTIDE SEQUENCE [LARGE SCALE GENOMIC DNA]</scope>
    <source>
        <strain>ATCC BAA-461 / DSM 12804 / CCUG 43448</strain>
    </source>
</reference>
<evidence type="ECO:0000255" key="1">
    <source>
        <dbReference type="HAMAP-Rule" id="MF_00076"/>
    </source>
</evidence>
<organism>
    <name type="scientific">Bordetella petrii (strain ATCC BAA-461 / DSM 12804 / CCUG 43448)</name>
    <dbReference type="NCBI Taxonomy" id="340100"/>
    <lineage>
        <taxon>Bacteria</taxon>
        <taxon>Pseudomonadati</taxon>
        <taxon>Pseudomonadota</taxon>
        <taxon>Betaproteobacteria</taxon>
        <taxon>Burkholderiales</taxon>
        <taxon>Alcaligenaceae</taxon>
        <taxon>Bordetella</taxon>
    </lineage>
</organism>
<proteinExistence type="inferred from homology"/>
<protein>
    <recommendedName>
        <fullName evidence="1">Imidazoleglycerol-phosphate dehydratase</fullName>
        <shortName evidence="1">IGPD</shortName>
        <ecNumber evidence="1">4.2.1.19</ecNumber>
    </recommendedName>
</protein>
<keyword id="KW-0028">Amino-acid biosynthesis</keyword>
<keyword id="KW-0963">Cytoplasm</keyword>
<keyword id="KW-0368">Histidine biosynthesis</keyword>
<keyword id="KW-0456">Lyase</keyword>
<comment type="catalytic activity">
    <reaction evidence="1">
        <text>D-erythro-1-(imidazol-4-yl)glycerol 3-phosphate = 3-(imidazol-4-yl)-2-oxopropyl phosphate + H2O</text>
        <dbReference type="Rhea" id="RHEA:11040"/>
        <dbReference type="ChEBI" id="CHEBI:15377"/>
        <dbReference type="ChEBI" id="CHEBI:57766"/>
        <dbReference type="ChEBI" id="CHEBI:58278"/>
        <dbReference type="EC" id="4.2.1.19"/>
    </reaction>
</comment>
<comment type="pathway">
    <text evidence="1">Amino-acid biosynthesis; L-histidine biosynthesis; L-histidine from 5-phospho-alpha-D-ribose 1-diphosphate: step 6/9.</text>
</comment>
<comment type="subcellular location">
    <subcellularLocation>
        <location evidence="1">Cytoplasm</location>
    </subcellularLocation>
</comment>
<comment type="similarity">
    <text evidence="1">Belongs to the imidazoleglycerol-phosphate dehydratase family.</text>
</comment>